<dbReference type="EC" id="2.5.1.72" evidence="1"/>
<dbReference type="EMBL" id="CP000789">
    <property type="protein sequence ID" value="ABU70584.1"/>
    <property type="molecule type" value="Genomic_DNA"/>
</dbReference>
<dbReference type="RefSeq" id="WP_012127454.1">
    <property type="nucleotide sequence ID" value="NC_009783.1"/>
</dbReference>
<dbReference type="SMR" id="A7MTL8"/>
<dbReference type="KEGG" id="vha:VIBHAR_01614"/>
<dbReference type="PATRIC" id="fig|338187.25.peg.1050"/>
<dbReference type="UniPathway" id="UPA00253">
    <property type="reaction ID" value="UER00327"/>
</dbReference>
<dbReference type="Proteomes" id="UP000008152">
    <property type="component" value="Chromosome I"/>
</dbReference>
<dbReference type="GO" id="GO:0005829">
    <property type="term" value="C:cytosol"/>
    <property type="evidence" value="ECO:0007669"/>
    <property type="project" value="TreeGrafter"/>
</dbReference>
<dbReference type="GO" id="GO:0051539">
    <property type="term" value="F:4 iron, 4 sulfur cluster binding"/>
    <property type="evidence" value="ECO:0007669"/>
    <property type="project" value="UniProtKB-KW"/>
</dbReference>
<dbReference type="GO" id="GO:0046872">
    <property type="term" value="F:metal ion binding"/>
    <property type="evidence" value="ECO:0007669"/>
    <property type="project" value="UniProtKB-KW"/>
</dbReference>
<dbReference type="GO" id="GO:0008987">
    <property type="term" value="F:quinolinate synthetase A activity"/>
    <property type="evidence" value="ECO:0007669"/>
    <property type="project" value="UniProtKB-UniRule"/>
</dbReference>
<dbReference type="GO" id="GO:0034628">
    <property type="term" value="P:'de novo' NAD biosynthetic process from L-aspartate"/>
    <property type="evidence" value="ECO:0007669"/>
    <property type="project" value="TreeGrafter"/>
</dbReference>
<dbReference type="FunFam" id="3.40.50.10800:FF:000001">
    <property type="entry name" value="Quinolinate synthase A"/>
    <property type="match status" value="1"/>
</dbReference>
<dbReference type="FunFam" id="3.40.50.10800:FF:000003">
    <property type="entry name" value="Quinolinate synthase A"/>
    <property type="match status" value="1"/>
</dbReference>
<dbReference type="Gene3D" id="3.40.50.10800">
    <property type="entry name" value="NadA-like"/>
    <property type="match status" value="3"/>
</dbReference>
<dbReference type="HAMAP" id="MF_00567">
    <property type="entry name" value="NadA_type1"/>
    <property type="match status" value="1"/>
</dbReference>
<dbReference type="InterPro" id="IPR003473">
    <property type="entry name" value="NadA"/>
</dbReference>
<dbReference type="InterPro" id="IPR036094">
    <property type="entry name" value="NadA_sf"/>
</dbReference>
<dbReference type="InterPro" id="IPR023513">
    <property type="entry name" value="Quinolinate_synth_A_type1"/>
</dbReference>
<dbReference type="NCBIfam" id="TIGR00550">
    <property type="entry name" value="nadA"/>
    <property type="match status" value="1"/>
</dbReference>
<dbReference type="NCBIfam" id="NF006877">
    <property type="entry name" value="PRK09375.1-1"/>
    <property type="match status" value="1"/>
</dbReference>
<dbReference type="NCBIfam" id="NF006878">
    <property type="entry name" value="PRK09375.1-2"/>
    <property type="match status" value="1"/>
</dbReference>
<dbReference type="PANTHER" id="PTHR30573:SF0">
    <property type="entry name" value="QUINOLINATE SYNTHASE, CHLOROPLASTIC"/>
    <property type="match status" value="1"/>
</dbReference>
<dbReference type="PANTHER" id="PTHR30573">
    <property type="entry name" value="QUINOLINATE SYNTHETASE A"/>
    <property type="match status" value="1"/>
</dbReference>
<dbReference type="Pfam" id="PF02445">
    <property type="entry name" value="NadA"/>
    <property type="match status" value="1"/>
</dbReference>
<dbReference type="SUPFAM" id="SSF142754">
    <property type="entry name" value="NadA-like"/>
    <property type="match status" value="1"/>
</dbReference>
<organism>
    <name type="scientific">Vibrio campbellii (strain ATCC BAA-1116)</name>
    <dbReference type="NCBI Taxonomy" id="2902295"/>
    <lineage>
        <taxon>Bacteria</taxon>
        <taxon>Pseudomonadati</taxon>
        <taxon>Pseudomonadota</taxon>
        <taxon>Gammaproteobacteria</taxon>
        <taxon>Vibrionales</taxon>
        <taxon>Vibrionaceae</taxon>
        <taxon>Vibrio</taxon>
    </lineage>
</organism>
<proteinExistence type="inferred from homology"/>
<protein>
    <recommendedName>
        <fullName evidence="1">Quinolinate synthase</fullName>
        <ecNumber evidence="1">2.5.1.72</ecNumber>
    </recommendedName>
</protein>
<feature type="chain" id="PRO_1000129429" description="Quinolinate synthase">
    <location>
        <begin position="1"/>
        <end position="353"/>
    </location>
</feature>
<feature type="binding site" evidence="1">
    <location>
        <position position="47"/>
    </location>
    <ligand>
        <name>iminosuccinate</name>
        <dbReference type="ChEBI" id="CHEBI:77875"/>
    </ligand>
</feature>
<feature type="binding site" evidence="1">
    <location>
        <position position="68"/>
    </location>
    <ligand>
        <name>iminosuccinate</name>
        <dbReference type="ChEBI" id="CHEBI:77875"/>
    </ligand>
</feature>
<feature type="binding site" evidence="1">
    <location>
        <position position="113"/>
    </location>
    <ligand>
        <name>[4Fe-4S] cluster</name>
        <dbReference type="ChEBI" id="CHEBI:49883"/>
    </ligand>
</feature>
<feature type="binding site" evidence="1">
    <location>
        <begin position="139"/>
        <end position="141"/>
    </location>
    <ligand>
        <name>iminosuccinate</name>
        <dbReference type="ChEBI" id="CHEBI:77875"/>
    </ligand>
</feature>
<feature type="binding site" evidence="1">
    <location>
        <position position="156"/>
    </location>
    <ligand>
        <name>iminosuccinate</name>
        <dbReference type="ChEBI" id="CHEBI:77875"/>
    </ligand>
</feature>
<feature type="binding site" evidence="1">
    <location>
        <position position="200"/>
    </location>
    <ligand>
        <name>[4Fe-4S] cluster</name>
        <dbReference type="ChEBI" id="CHEBI:49883"/>
    </ligand>
</feature>
<feature type="binding site" evidence="1">
    <location>
        <begin position="226"/>
        <end position="228"/>
    </location>
    <ligand>
        <name>iminosuccinate</name>
        <dbReference type="ChEBI" id="CHEBI:77875"/>
    </ligand>
</feature>
<feature type="binding site" evidence="1">
    <location>
        <position position="243"/>
    </location>
    <ligand>
        <name>iminosuccinate</name>
        <dbReference type="ChEBI" id="CHEBI:77875"/>
    </ligand>
</feature>
<feature type="binding site" evidence="1">
    <location>
        <position position="297"/>
    </location>
    <ligand>
        <name>[4Fe-4S] cluster</name>
        <dbReference type="ChEBI" id="CHEBI:49883"/>
    </ligand>
</feature>
<evidence type="ECO:0000255" key="1">
    <source>
        <dbReference type="HAMAP-Rule" id="MF_00567"/>
    </source>
</evidence>
<reference key="1">
    <citation type="submission" date="2007-08" db="EMBL/GenBank/DDBJ databases">
        <authorList>
            <consortium name="The Vibrio harveyi Genome Sequencing Project"/>
            <person name="Bassler B."/>
            <person name="Clifton S.W."/>
            <person name="Fulton L."/>
            <person name="Delehaunty K."/>
            <person name="Fronick C."/>
            <person name="Harrison M."/>
            <person name="Markivic C."/>
            <person name="Fulton R."/>
            <person name="Tin-Wollam A.-M."/>
            <person name="Shah N."/>
            <person name="Pepin K."/>
            <person name="Nash W."/>
            <person name="Thiruvilangam P."/>
            <person name="Bhonagiri V."/>
            <person name="Waters C."/>
            <person name="Tu K.C."/>
            <person name="Irgon J."/>
            <person name="Wilson R.K."/>
        </authorList>
    </citation>
    <scope>NUCLEOTIDE SEQUENCE [LARGE SCALE GENOMIC DNA]</scope>
    <source>
        <strain>ATCC BAA-1116 / BB120</strain>
    </source>
</reference>
<comment type="function">
    <text evidence="1">Catalyzes the condensation of iminoaspartate with dihydroxyacetone phosphate to form quinolinate.</text>
</comment>
<comment type="catalytic activity">
    <reaction evidence="1">
        <text>iminosuccinate + dihydroxyacetone phosphate = quinolinate + phosphate + 2 H2O + H(+)</text>
        <dbReference type="Rhea" id="RHEA:25888"/>
        <dbReference type="ChEBI" id="CHEBI:15377"/>
        <dbReference type="ChEBI" id="CHEBI:15378"/>
        <dbReference type="ChEBI" id="CHEBI:29959"/>
        <dbReference type="ChEBI" id="CHEBI:43474"/>
        <dbReference type="ChEBI" id="CHEBI:57642"/>
        <dbReference type="ChEBI" id="CHEBI:77875"/>
        <dbReference type="EC" id="2.5.1.72"/>
    </reaction>
    <physiologicalReaction direction="left-to-right" evidence="1">
        <dbReference type="Rhea" id="RHEA:25889"/>
    </physiologicalReaction>
</comment>
<comment type="cofactor">
    <cofactor evidence="1">
        <name>[4Fe-4S] cluster</name>
        <dbReference type="ChEBI" id="CHEBI:49883"/>
    </cofactor>
    <text evidence="1">Binds 1 [4Fe-4S] cluster per subunit.</text>
</comment>
<comment type="pathway">
    <text evidence="1">Cofactor biosynthesis; NAD(+) biosynthesis; quinolinate from iminoaspartate: step 1/1.</text>
</comment>
<comment type="subcellular location">
    <subcellularLocation>
        <location evidence="1">Cytoplasm</location>
    </subcellularLocation>
</comment>
<comment type="similarity">
    <text evidence="1">Belongs to the quinolinate synthase family. Type 1 subfamily.</text>
</comment>
<accession>A7MTL8</accession>
<keyword id="KW-0004">4Fe-4S</keyword>
<keyword id="KW-0963">Cytoplasm</keyword>
<keyword id="KW-0408">Iron</keyword>
<keyword id="KW-0411">Iron-sulfur</keyword>
<keyword id="KW-0479">Metal-binding</keyword>
<keyword id="KW-0662">Pyridine nucleotide biosynthesis</keyword>
<keyword id="KW-0808">Transferase</keyword>
<name>NADA_VIBC1</name>
<gene>
    <name evidence="1" type="primary">nadA</name>
    <name type="ordered locus">VIBHAR_01614</name>
</gene>
<sequence>MSHILDKIETVYPFPPKPIPLSQEEKADYIERIKKLLKEKDAVLIAHYYTDPEIQALAEETGGFVGDSLEMAKFGNRHPASTLIIGGVRFMGESAKILTPEKRILMPTLEAECSLDLGCPADKFSEFCDAHPDHTVVVYANTSAAVKARADWVVTSSIALDIVEHLDAEDKPIIWGPDRHLGSYIAKKTGADMLLWHAECVVHDEFSADALRKMKNVYPDAAILVHPESPASVVELADAVGSTSQLIKAAKELPQQQMIVATDKGIFFKMQQLVPEKELIEAPTAGAGATCRSCAHCPWMAMNGLKAIEKALSEGGAEHEIFVDEALRVKSLIPLNRMLDFAEQLNMQVKGNA</sequence>